<proteinExistence type="inferred from homology"/>
<protein>
    <recommendedName>
        <fullName evidence="1">Ribulose bisphosphate carboxylase large chain</fullName>
        <shortName evidence="1">RuBisCO large subunit</shortName>
        <ecNumber evidence="1">4.1.1.39</ecNumber>
    </recommendedName>
</protein>
<geneLocation type="chloroplast"/>
<reference key="1">
    <citation type="journal article" date="2007" name="Mol. Biol. Evol.">
        <title>Gene relocations within chloroplast genomes of Jasminum and Menodora (Oleaceae) are due to multiple, overlapping inversions.</title>
        <authorList>
            <person name="Lee H.-L."/>
            <person name="Jansen R.K."/>
            <person name="Chumley T.W."/>
            <person name="Kim K.-J."/>
        </authorList>
    </citation>
    <scope>NUCLEOTIDE SEQUENCE [LARGE SCALE GENOMIC DNA]</scope>
</reference>
<gene>
    <name evidence="1" type="primary">rbcL</name>
    <name type="ORF">JNC0612</name>
</gene>
<sequence length="479" mass="53108">MSPQTETKASVGFKAGVKEYKLTYYTPEYETKDTDILAAFRVTPQPGVPPEEAGAAVAAESSTGTWTTVWTDGLTSLDRYKGRCYHIEPVPGETDQYICYVAYPLDLFEEGSVTNMFTSIVGNVFGFKALRALRLEDLRIPPAYIKTFQGPPHGIQVERDKLNKYGRPLLGCTIKPKLGLSAKNYGRAVYECLRGGLDFTKDDENVNSQPFMRWRDRFLFCAEAIYKSQAETGEIKGHYLNATAGTSEEMIKRAVFARELGVPIVMHDYLTGGFTANTSLAHYCRDNGLLLHIHRAMHAVIDRQKNHGIHFRVLAKALRMSGGDHIHSGTVVGKLEGERDITLGFVDLLRDDFIEKDRSRGIYFTQDWVSLPGVLPVASGGIHVWHMPALTEIFGDDSVLQFGGGTLGHPWGNAPGAVANRVALEACVKARNEGRDLASEGNVIIREAAKWSPELSAACEVWKEIRFDFKAVDTLDPEK</sequence>
<keyword id="KW-0007">Acetylation</keyword>
<keyword id="KW-0113">Calvin cycle</keyword>
<keyword id="KW-0120">Carbon dioxide fixation</keyword>
<keyword id="KW-0150">Chloroplast</keyword>
<keyword id="KW-0456">Lyase</keyword>
<keyword id="KW-0460">Magnesium</keyword>
<keyword id="KW-0479">Metal-binding</keyword>
<keyword id="KW-0488">Methylation</keyword>
<keyword id="KW-0503">Monooxygenase</keyword>
<keyword id="KW-0560">Oxidoreductase</keyword>
<keyword id="KW-0601">Photorespiration</keyword>
<keyword id="KW-0602">Photosynthesis</keyword>
<keyword id="KW-0934">Plastid</keyword>
<accession>Q06RC1</accession>
<evidence type="ECO:0000255" key="1">
    <source>
        <dbReference type="HAMAP-Rule" id="MF_01338"/>
    </source>
</evidence>
<comment type="function">
    <text evidence="1">RuBisCO catalyzes two reactions: the carboxylation of D-ribulose 1,5-bisphosphate, the primary event in carbon dioxide fixation, as well as the oxidative fragmentation of the pentose substrate in the photorespiration process. Both reactions occur simultaneously and in competition at the same active site.</text>
</comment>
<comment type="catalytic activity">
    <reaction evidence="1">
        <text>2 (2R)-3-phosphoglycerate + 2 H(+) = D-ribulose 1,5-bisphosphate + CO2 + H2O</text>
        <dbReference type="Rhea" id="RHEA:23124"/>
        <dbReference type="ChEBI" id="CHEBI:15377"/>
        <dbReference type="ChEBI" id="CHEBI:15378"/>
        <dbReference type="ChEBI" id="CHEBI:16526"/>
        <dbReference type="ChEBI" id="CHEBI:57870"/>
        <dbReference type="ChEBI" id="CHEBI:58272"/>
        <dbReference type="EC" id="4.1.1.39"/>
    </reaction>
</comment>
<comment type="catalytic activity">
    <reaction evidence="1">
        <text>D-ribulose 1,5-bisphosphate + O2 = 2-phosphoglycolate + (2R)-3-phosphoglycerate + 2 H(+)</text>
        <dbReference type="Rhea" id="RHEA:36631"/>
        <dbReference type="ChEBI" id="CHEBI:15378"/>
        <dbReference type="ChEBI" id="CHEBI:15379"/>
        <dbReference type="ChEBI" id="CHEBI:57870"/>
        <dbReference type="ChEBI" id="CHEBI:58033"/>
        <dbReference type="ChEBI" id="CHEBI:58272"/>
    </reaction>
</comment>
<comment type="cofactor">
    <cofactor evidence="1">
        <name>Mg(2+)</name>
        <dbReference type="ChEBI" id="CHEBI:18420"/>
    </cofactor>
    <text evidence="1">Binds 1 Mg(2+) ion per subunit.</text>
</comment>
<comment type="subunit">
    <text evidence="1">Heterohexadecamer of 8 large chains and 8 small chains.</text>
</comment>
<comment type="subcellular location">
    <subcellularLocation>
        <location>Plastid</location>
        <location>Chloroplast</location>
    </subcellularLocation>
</comment>
<comment type="miscellaneous">
    <text evidence="1">The basic functional RuBisCO is composed of a large chain homodimer in a 'head-to-tail' conformation. In form I RuBisCO this homodimer is arranged in a barrel-like tetramer with the small subunits forming a tetrameric 'cap' on each end of the 'barrel'.</text>
</comment>
<comment type="similarity">
    <text evidence="1">Belongs to the RuBisCO large chain family. Type I subfamily.</text>
</comment>
<name>RBL_JASNU</name>
<organism>
    <name type="scientific">Jasminum nudiflorum</name>
    <name type="common">Winter jasmine</name>
    <dbReference type="NCBI Taxonomy" id="126431"/>
    <lineage>
        <taxon>Eukaryota</taxon>
        <taxon>Viridiplantae</taxon>
        <taxon>Streptophyta</taxon>
        <taxon>Embryophyta</taxon>
        <taxon>Tracheophyta</taxon>
        <taxon>Spermatophyta</taxon>
        <taxon>Magnoliopsida</taxon>
        <taxon>eudicotyledons</taxon>
        <taxon>Gunneridae</taxon>
        <taxon>Pentapetalae</taxon>
        <taxon>asterids</taxon>
        <taxon>lamiids</taxon>
        <taxon>Lamiales</taxon>
        <taxon>Oleaceae</taxon>
        <taxon>Jasmineae</taxon>
        <taxon>Jasminum</taxon>
    </lineage>
</organism>
<feature type="propeptide" id="PRO_0000275363" evidence="1">
    <location>
        <begin position="1"/>
        <end position="2"/>
    </location>
</feature>
<feature type="chain" id="PRO_0000275364" description="Ribulose bisphosphate carboxylase large chain">
    <location>
        <begin position="3"/>
        <end position="479"/>
    </location>
</feature>
<feature type="active site" description="Proton acceptor" evidence="1">
    <location>
        <position position="175"/>
    </location>
</feature>
<feature type="active site" description="Proton acceptor" evidence="1">
    <location>
        <position position="294"/>
    </location>
</feature>
<feature type="binding site" description="in homodimeric partner" evidence="1">
    <location>
        <position position="123"/>
    </location>
    <ligand>
        <name>substrate</name>
    </ligand>
</feature>
<feature type="binding site" evidence="1">
    <location>
        <position position="173"/>
    </location>
    <ligand>
        <name>substrate</name>
    </ligand>
</feature>
<feature type="binding site" evidence="1">
    <location>
        <position position="177"/>
    </location>
    <ligand>
        <name>substrate</name>
    </ligand>
</feature>
<feature type="binding site" description="via carbamate group" evidence="1">
    <location>
        <position position="201"/>
    </location>
    <ligand>
        <name>Mg(2+)</name>
        <dbReference type="ChEBI" id="CHEBI:18420"/>
    </ligand>
</feature>
<feature type="binding site" evidence="1">
    <location>
        <position position="203"/>
    </location>
    <ligand>
        <name>Mg(2+)</name>
        <dbReference type="ChEBI" id="CHEBI:18420"/>
    </ligand>
</feature>
<feature type="binding site" evidence="1">
    <location>
        <position position="204"/>
    </location>
    <ligand>
        <name>Mg(2+)</name>
        <dbReference type="ChEBI" id="CHEBI:18420"/>
    </ligand>
</feature>
<feature type="binding site" evidence="1">
    <location>
        <position position="295"/>
    </location>
    <ligand>
        <name>substrate</name>
    </ligand>
</feature>
<feature type="binding site" evidence="1">
    <location>
        <position position="327"/>
    </location>
    <ligand>
        <name>substrate</name>
    </ligand>
</feature>
<feature type="binding site" evidence="1">
    <location>
        <position position="379"/>
    </location>
    <ligand>
        <name>substrate</name>
    </ligand>
</feature>
<feature type="site" description="Transition state stabilizer" evidence="1">
    <location>
        <position position="334"/>
    </location>
</feature>
<feature type="modified residue" description="N-acetylproline" evidence="1">
    <location>
        <position position="3"/>
    </location>
</feature>
<feature type="modified residue" description="N6,N6,N6-trimethyllysine" evidence="1">
    <location>
        <position position="14"/>
    </location>
</feature>
<feature type="modified residue" description="N6-carboxylysine" evidence="1">
    <location>
        <position position="201"/>
    </location>
</feature>
<dbReference type="EC" id="4.1.1.39" evidence="1"/>
<dbReference type="EMBL" id="DQ673255">
    <property type="protein sequence ID" value="ABG74638.1"/>
    <property type="molecule type" value="Genomic_DNA"/>
</dbReference>
<dbReference type="RefSeq" id="YP_778500.1">
    <property type="nucleotide sequence ID" value="NC_008407.1"/>
</dbReference>
<dbReference type="SMR" id="Q06RC1"/>
<dbReference type="GeneID" id="4319768"/>
<dbReference type="GO" id="GO:0009507">
    <property type="term" value="C:chloroplast"/>
    <property type="evidence" value="ECO:0007669"/>
    <property type="project" value="UniProtKB-SubCell"/>
</dbReference>
<dbReference type="GO" id="GO:0000287">
    <property type="term" value="F:magnesium ion binding"/>
    <property type="evidence" value="ECO:0007669"/>
    <property type="project" value="UniProtKB-UniRule"/>
</dbReference>
<dbReference type="GO" id="GO:0004497">
    <property type="term" value="F:monooxygenase activity"/>
    <property type="evidence" value="ECO:0007669"/>
    <property type="project" value="UniProtKB-KW"/>
</dbReference>
<dbReference type="GO" id="GO:0016984">
    <property type="term" value="F:ribulose-bisphosphate carboxylase activity"/>
    <property type="evidence" value="ECO:0007669"/>
    <property type="project" value="UniProtKB-UniRule"/>
</dbReference>
<dbReference type="GO" id="GO:0009853">
    <property type="term" value="P:photorespiration"/>
    <property type="evidence" value="ECO:0007669"/>
    <property type="project" value="UniProtKB-KW"/>
</dbReference>
<dbReference type="GO" id="GO:0019253">
    <property type="term" value="P:reductive pentose-phosphate cycle"/>
    <property type="evidence" value="ECO:0007669"/>
    <property type="project" value="UniProtKB-UniRule"/>
</dbReference>
<dbReference type="CDD" id="cd08212">
    <property type="entry name" value="RuBisCO_large_I"/>
    <property type="match status" value="1"/>
</dbReference>
<dbReference type="FunFam" id="3.20.20.110:FF:000001">
    <property type="entry name" value="Ribulose bisphosphate carboxylase large chain"/>
    <property type="match status" value="1"/>
</dbReference>
<dbReference type="FunFam" id="3.30.70.150:FF:000001">
    <property type="entry name" value="Ribulose bisphosphate carboxylase large chain"/>
    <property type="match status" value="1"/>
</dbReference>
<dbReference type="Gene3D" id="3.20.20.110">
    <property type="entry name" value="Ribulose bisphosphate carboxylase, large subunit, C-terminal domain"/>
    <property type="match status" value="1"/>
</dbReference>
<dbReference type="Gene3D" id="3.30.70.150">
    <property type="entry name" value="RuBisCO large subunit, N-terminal domain"/>
    <property type="match status" value="1"/>
</dbReference>
<dbReference type="HAMAP" id="MF_01338">
    <property type="entry name" value="RuBisCO_L_type1"/>
    <property type="match status" value="1"/>
</dbReference>
<dbReference type="InterPro" id="IPR033966">
    <property type="entry name" value="RuBisCO"/>
</dbReference>
<dbReference type="InterPro" id="IPR020878">
    <property type="entry name" value="RuBisCo_large_chain_AS"/>
</dbReference>
<dbReference type="InterPro" id="IPR000685">
    <property type="entry name" value="RuBisCO_lsu_C"/>
</dbReference>
<dbReference type="InterPro" id="IPR036376">
    <property type="entry name" value="RuBisCO_lsu_C_sf"/>
</dbReference>
<dbReference type="InterPro" id="IPR017443">
    <property type="entry name" value="RuBisCO_lsu_fd_N"/>
</dbReference>
<dbReference type="InterPro" id="IPR036422">
    <property type="entry name" value="RuBisCO_lsu_N_sf"/>
</dbReference>
<dbReference type="InterPro" id="IPR020888">
    <property type="entry name" value="RuBisCO_lsuI"/>
</dbReference>
<dbReference type="NCBIfam" id="NF003252">
    <property type="entry name" value="PRK04208.1"/>
    <property type="match status" value="1"/>
</dbReference>
<dbReference type="PANTHER" id="PTHR42704">
    <property type="entry name" value="RIBULOSE BISPHOSPHATE CARBOXYLASE"/>
    <property type="match status" value="1"/>
</dbReference>
<dbReference type="PANTHER" id="PTHR42704:SF15">
    <property type="entry name" value="RIBULOSE BISPHOSPHATE CARBOXYLASE LARGE CHAIN"/>
    <property type="match status" value="1"/>
</dbReference>
<dbReference type="Pfam" id="PF00016">
    <property type="entry name" value="RuBisCO_large"/>
    <property type="match status" value="1"/>
</dbReference>
<dbReference type="Pfam" id="PF02788">
    <property type="entry name" value="RuBisCO_large_N"/>
    <property type="match status" value="1"/>
</dbReference>
<dbReference type="SFLD" id="SFLDG01052">
    <property type="entry name" value="RuBisCO"/>
    <property type="match status" value="1"/>
</dbReference>
<dbReference type="SFLD" id="SFLDS00014">
    <property type="entry name" value="RuBisCO"/>
    <property type="match status" value="1"/>
</dbReference>
<dbReference type="SFLD" id="SFLDG00301">
    <property type="entry name" value="RuBisCO-like_proteins"/>
    <property type="match status" value="1"/>
</dbReference>
<dbReference type="SUPFAM" id="SSF51649">
    <property type="entry name" value="RuBisCo, C-terminal domain"/>
    <property type="match status" value="1"/>
</dbReference>
<dbReference type="SUPFAM" id="SSF54966">
    <property type="entry name" value="RuBisCO, large subunit, small (N-terminal) domain"/>
    <property type="match status" value="1"/>
</dbReference>
<dbReference type="PROSITE" id="PS00157">
    <property type="entry name" value="RUBISCO_LARGE"/>
    <property type="match status" value="1"/>
</dbReference>